<feature type="signal peptide" evidence="2">
    <location>
        <begin position="1"/>
        <end position="15"/>
    </location>
</feature>
<feature type="chain" id="PRO_0000044623" description="Membrane-bound lytic murein transglycosylase D">
    <location>
        <begin position="16"/>
        <end position="452"/>
    </location>
</feature>
<feature type="domain" description="LysM 1" evidence="3">
    <location>
        <begin position="341"/>
        <end position="384"/>
    </location>
</feature>
<feature type="domain" description="LysM 2" evidence="3">
    <location>
        <begin position="400"/>
        <end position="448"/>
    </location>
</feature>
<feature type="region of interest" description="Slt-type domain">
    <location>
        <begin position="113"/>
        <end position="198"/>
    </location>
</feature>
<feature type="active site" evidence="4">
    <location>
        <position position="125"/>
    </location>
</feature>
<feature type="lipid moiety-binding region" description="N-palmitoyl cysteine" evidence="2">
    <location>
        <position position="16"/>
    </location>
</feature>
<feature type="lipid moiety-binding region" description="S-diacylglycerol cysteine" evidence="2">
    <location>
        <position position="16"/>
    </location>
</feature>
<sequence>MKAKAILLASVLLVGCQSTGNVQQHAQSLSAAGQGEAAKFTSQARWMDDGTSIAPDGDLWAFIGDELKMGIPENDRIREQKQKYLRNKSYLHDVTLRAEPYMYWIAGQVKKRNMPMELVLLPIVESAFDPHATSGANAAGIWQIIPSTGRNYGLKQTRNYDARRDVVASTTAALNMMQRLNKMFDGDWLLTVAAYNSGEGRVMKAIKTNKARGKSTDFWSLPLPQETKQYVPKMLALSDILKNSKRYGVRLPTTDESRALARVHLSSPVEMAKVADMAGISVSKLKTFNAGVKGSTLGASGPQYVMVPKKHADQLRESLASGEIAAVQSTLVADNTPLNSRVYTVRSGDTLSSIASRLGVSTKDLQQWNKLRGSKLKPGQSLTIGAGSSAQRLANNSDSITYRVRKGDSLSSIAKRHGVNIKDVMRWNSDTANLQPGDKLTLFVKNNNMPDS</sequence>
<keyword id="KW-1003">Cell membrane</keyword>
<keyword id="KW-0961">Cell wall biogenesis/degradation</keyword>
<keyword id="KW-0449">Lipoprotein</keyword>
<keyword id="KW-0456">Lyase</keyword>
<keyword id="KW-0472">Membrane</keyword>
<keyword id="KW-0564">Palmitate</keyword>
<keyword id="KW-1185">Reference proteome</keyword>
<keyword id="KW-0677">Repeat</keyword>
<keyword id="KW-0732">Signal</keyword>
<comment type="function">
    <text evidence="1">Murein-degrading enzyme. May play a role in recycling of muropeptides during cell elongation and/or cell division (By similarity).</text>
</comment>
<comment type="catalytic activity">
    <reaction>
        <text>Exolytic cleavage of the (1-&gt;4)-beta-glycosidic linkage between N-acetylmuramic acid (MurNAc) and N-acetylglucosamine (GlcNAc) residues in peptidoglycan, from either the reducing or the non-reducing ends of the peptidoglycan chains, with concomitant formation of a 1,6-anhydrobond in the MurNAc residue.</text>
        <dbReference type="EC" id="4.2.2.n1"/>
    </reaction>
</comment>
<comment type="subcellular location">
    <subcellularLocation>
        <location evidence="5">Cell membrane</location>
        <topology evidence="5">Lipid-anchor</topology>
    </subcellularLocation>
</comment>
<comment type="domain">
    <text>LysM domains are thought to be involved in peptidoglycan binding.</text>
</comment>
<comment type="similarity">
    <text evidence="5">Belongs to the transglycosylase Slt family.</text>
</comment>
<proteinExistence type="inferred from homology"/>
<evidence type="ECO:0000250" key="1"/>
<evidence type="ECO:0000255" key="2">
    <source>
        <dbReference type="PROSITE-ProRule" id="PRU00303"/>
    </source>
</evidence>
<evidence type="ECO:0000255" key="3">
    <source>
        <dbReference type="PROSITE-ProRule" id="PRU01118"/>
    </source>
</evidence>
<evidence type="ECO:0000255" key="4">
    <source>
        <dbReference type="PROSITE-ProRule" id="PRU10071"/>
    </source>
</evidence>
<evidence type="ECO:0000305" key="5"/>
<name>MLTD_ECOL6</name>
<dbReference type="EC" id="4.2.2.n1"/>
<dbReference type="EMBL" id="AE014075">
    <property type="protein sequence ID" value="AAN78738.1"/>
    <property type="molecule type" value="Genomic_DNA"/>
</dbReference>
<dbReference type="RefSeq" id="WP_000644685.1">
    <property type="nucleotide sequence ID" value="NZ_CP051263.1"/>
</dbReference>
<dbReference type="SMR" id="P0AEZ8"/>
<dbReference type="STRING" id="199310.c0248"/>
<dbReference type="CAZy" id="CBM50">
    <property type="family name" value="Carbohydrate-Binding Module Family 50"/>
</dbReference>
<dbReference type="CAZy" id="GH23">
    <property type="family name" value="Glycoside Hydrolase Family 23"/>
</dbReference>
<dbReference type="GeneID" id="93777212"/>
<dbReference type="KEGG" id="ecc:c0248"/>
<dbReference type="eggNOG" id="COG0741">
    <property type="taxonomic scope" value="Bacteria"/>
</dbReference>
<dbReference type="eggNOG" id="COG1388">
    <property type="taxonomic scope" value="Bacteria"/>
</dbReference>
<dbReference type="HOGENOM" id="CLU_009520_1_4_6"/>
<dbReference type="BioCyc" id="ECOL199310:C0248-MONOMER"/>
<dbReference type="Proteomes" id="UP000001410">
    <property type="component" value="Chromosome"/>
</dbReference>
<dbReference type="GO" id="GO:0005886">
    <property type="term" value="C:plasma membrane"/>
    <property type="evidence" value="ECO:0007669"/>
    <property type="project" value="UniProtKB-SubCell"/>
</dbReference>
<dbReference type="GO" id="GO:0008932">
    <property type="term" value="F:lytic endotransglycosylase activity"/>
    <property type="evidence" value="ECO:0007669"/>
    <property type="project" value="TreeGrafter"/>
</dbReference>
<dbReference type="GO" id="GO:0071555">
    <property type="term" value="P:cell wall organization"/>
    <property type="evidence" value="ECO:0007669"/>
    <property type="project" value="UniProtKB-KW"/>
</dbReference>
<dbReference type="GO" id="GO:0000270">
    <property type="term" value="P:peptidoglycan metabolic process"/>
    <property type="evidence" value="ECO:0007669"/>
    <property type="project" value="InterPro"/>
</dbReference>
<dbReference type="CDD" id="cd00118">
    <property type="entry name" value="LysM"/>
    <property type="match status" value="2"/>
</dbReference>
<dbReference type="CDD" id="cd16894">
    <property type="entry name" value="MltD-like"/>
    <property type="match status" value="1"/>
</dbReference>
<dbReference type="FunFam" id="1.10.530.10:FF:000004">
    <property type="entry name" value="Membrane-bound lytic murein transglycosylase D"/>
    <property type="match status" value="1"/>
</dbReference>
<dbReference type="FunFam" id="3.10.350.10:FF:000003">
    <property type="entry name" value="Membrane-bound lytic murein transglycosylase D"/>
    <property type="match status" value="1"/>
</dbReference>
<dbReference type="FunFam" id="3.10.350.10:FF:000004">
    <property type="entry name" value="Membrane-bound lytic murein transglycosylase D"/>
    <property type="match status" value="1"/>
</dbReference>
<dbReference type="Gene3D" id="1.10.530.10">
    <property type="match status" value="1"/>
</dbReference>
<dbReference type="Gene3D" id="3.10.350.10">
    <property type="entry name" value="LysM domain"/>
    <property type="match status" value="2"/>
</dbReference>
<dbReference type="InterPro" id="IPR018392">
    <property type="entry name" value="LysM_dom"/>
</dbReference>
<dbReference type="InterPro" id="IPR036779">
    <property type="entry name" value="LysM_dom_sf"/>
</dbReference>
<dbReference type="InterPro" id="IPR023346">
    <property type="entry name" value="Lysozyme-like_dom_sf"/>
</dbReference>
<dbReference type="InterPro" id="IPR000189">
    <property type="entry name" value="Transglyc_AS"/>
</dbReference>
<dbReference type="InterPro" id="IPR008258">
    <property type="entry name" value="Transglycosylase_SLT_dom_1"/>
</dbReference>
<dbReference type="NCBIfam" id="NF008050">
    <property type="entry name" value="PRK10783.1"/>
    <property type="match status" value="1"/>
</dbReference>
<dbReference type="PANTHER" id="PTHR33734">
    <property type="entry name" value="LYSM DOMAIN-CONTAINING GPI-ANCHORED PROTEIN 2"/>
    <property type="match status" value="1"/>
</dbReference>
<dbReference type="PANTHER" id="PTHR33734:SF22">
    <property type="entry name" value="MEMBRANE-BOUND LYTIC MUREIN TRANSGLYCOSYLASE D"/>
    <property type="match status" value="1"/>
</dbReference>
<dbReference type="Pfam" id="PF01476">
    <property type="entry name" value="LysM"/>
    <property type="match status" value="2"/>
</dbReference>
<dbReference type="Pfam" id="PF01464">
    <property type="entry name" value="SLT"/>
    <property type="match status" value="1"/>
</dbReference>
<dbReference type="SMART" id="SM00257">
    <property type="entry name" value="LysM"/>
    <property type="match status" value="2"/>
</dbReference>
<dbReference type="SUPFAM" id="SSF54106">
    <property type="entry name" value="LysM domain"/>
    <property type="match status" value="2"/>
</dbReference>
<dbReference type="SUPFAM" id="SSF53955">
    <property type="entry name" value="Lysozyme-like"/>
    <property type="match status" value="1"/>
</dbReference>
<dbReference type="PROSITE" id="PS51782">
    <property type="entry name" value="LYSM"/>
    <property type="match status" value="2"/>
</dbReference>
<dbReference type="PROSITE" id="PS51257">
    <property type="entry name" value="PROKAR_LIPOPROTEIN"/>
    <property type="match status" value="1"/>
</dbReference>
<dbReference type="PROSITE" id="PS00922">
    <property type="entry name" value="TRANSGLYCOSYLASE"/>
    <property type="match status" value="1"/>
</dbReference>
<gene>
    <name type="primary">mltD</name>
    <name type="synonym">dniR</name>
    <name type="ordered locus">c0248</name>
</gene>
<accession>P0AEZ8</accession>
<accession>P23931</accession>
<accession>P32982</accession>
<accession>P77350</accession>
<reference key="1">
    <citation type="journal article" date="2002" name="Proc. Natl. Acad. Sci. U.S.A.">
        <title>Extensive mosaic structure revealed by the complete genome sequence of uropathogenic Escherichia coli.</title>
        <authorList>
            <person name="Welch R.A."/>
            <person name="Burland V."/>
            <person name="Plunkett G. III"/>
            <person name="Redford P."/>
            <person name="Roesch P."/>
            <person name="Rasko D."/>
            <person name="Buckles E.L."/>
            <person name="Liou S.-R."/>
            <person name="Boutin A."/>
            <person name="Hackett J."/>
            <person name="Stroud D."/>
            <person name="Mayhew G.F."/>
            <person name="Rose D.J."/>
            <person name="Zhou S."/>
            <person name="Schwartz D.C."/>
            <person name="Perna N.T."/>
            <person name="Mobley H.L.T."/>
            <person name="Donnenberg M.S."/>
            <person name="Blattner F.R."/>
        </authorList>
    </citation>
    <scope>NUCLEOTIDE SEQUENCE [LARGE SCALE GENOMIC DNA]</scope>
    <source>
        <strain>CFT073 / ATCC 700928 / UPEC</strain>
    </source>
</reference>
<protein>
    <recommendedName>
        <fullName>Membrane-bound lytic murein transglycosylase D</fullName>
        <ecNumber>4.2.2.n1</ecNumber>
    </recommendedName>
    <alternativeName>
        <fullName>Murein hydrolase D</fullName>
    </alternativeName>
    <alternativeName>
        <fullName>Regulatory protein DniR</fullName>
    </alternativeName>
</protein>
<organism>
    <name type="scientific">Escherichia coli O6:H1 (strain CFT073 / ATCC 700928 / UPEC)</name>
    <dbReference type="NCBI Taxonomy" id="199310"/>
    <lineage>
        <taxon>Bacteria</taxon>
        <taxon>Pseudomonadati</taxon>
        <taxon>Pseudomonadota</taxon>
        <taxon>Gammaproteobacteria</taxon>
        <taxon>Enterobacterales</taxon>
        <taxon>Enterobacteriaceae</taxon>
        <taxon>Escherichia</taxon>
    </lineage>
</organism>